<sequence>MTQYLDFEKPLAEIEGKAEELRALARANEEMDVAEEAAALDAKAAKLLDELYRDLTPWRKCQVARHPERPHCRDYVDALFTEYTPLAGDRNFADDLAVMGGLARFNDRPVMVIGHEKGSDTKSRIAHNFGMARPEGYRKAVRLIEMAGRFGLPVVTLVDTAGAYPGKGAEERGQSEAIARSTEMCLRAGVPLVSVIIGEGGSGGAVAFATANRVAMLEHSIYSVISPEGCASILWKNAEKMREAAEALRLTAQDLLKLGVVDRVIPEPRGGAHRDKTAAMEAVRGAIAAMLKELDGKSAEALIKDRRKKFLDIGSKGLAA</sequence>
<comment type="function">
    <text evidence="1">Component of the acetyl coenzyme A carboxylase (ACC) complex. First, biotin carboxylase catalyzes the carboxylation of biotin on its carrier protein (BCCP) and then the CO(2) group is transferred by the carboxyltransferase to acetyl-CoA to form malonyl-CoA.</text>
</comment>
<comment type="catalytic activity">
    <reaction evidence="1">
        <text>N(6)-carboxybiotinyl-L-lysyl-[protein] + acetyl-CoA = N(6)-biotinyl-L-lysyl-[protein] + malonyl-CoA</text>
        <dbReference type="Rhea" id="RHEA:54728"/>
        <dbReference type="Rhea" id="RHEA-COMP:10505"/>
        <dbReference type="Rhea" id="RHEA-COMP:10506"/>
        <dbReference type="ChEBI" id="CHEBI:57288"/>
        <dbReference type="ChEBI" id="CHEBI:57384"/>
        <dbReference type="ChEBI" id="CHEBI:83144"/>
        <dbReference type="ChEBI" id="CHEBI:83145"/>
        <dbReference type="EC" id="2.1.3.15"/>
    </reaction>
</comment>
<comment type="pathway">
    <text evidence="1">Lipid metabolism; malonyl-CoA biosynthesis; malonyl-CoA from acetyl-CoA: step 1/1.</text>
</comment>
<comment type="subunit">
    <text evidence="1">Acetyl-CoA carboxylase is a heterohexamer composed of biotin carboxyl carrier protein (AccB), biotin carboxylase (AccC) and two subunits each of ACCase subunit alpha (AccA) and ACCase subunit beta (AccD).</text>
</comment>
<comment type="subcellular location">
    <subcellularLocation>
        <location evidence="1">Cytoplasm</location>
    </subcellularLocation>
</comment>
<comment type="similarity">
    <text evidence="1">Belongs to the AccA family.</text>
</comment>
<name>ACCA_RUEPO</name>
<accession>Q5LME7</accession>
<feature type="chain" id="PRO_0000223825" description="Acetyl-coenzyme A carboxylase carboxyl transferase subunit alpha">
    <location>
        <begin position="1"/>
        <end position="320"/>
    </location>
</feature>
<feature type="domain" description="CoA carboxyltransferase C-terminal" evidence="2">
    <location>
        <begin position="39"/>
        <end position="293"/>
    </location>
</feature>
<keyword id="KW-0067">ATP-binding</keyword>
<keyword id="KW-0963">Cytoplasm</keyword>
<keyword id="KW-0275">Fatty acid biosynthesis</keyword>
<keyword id="KW-0276">Fatty acid metabolism</keyword>
<keyword id="KW-0444">Lipid biosynthesis</keyword>
<keyword id="KW-0443">Lipid metabolism</keyword>
<keyword id="KW-0547">Nucleotide-binding</keyword>
<keyword id="KW-1185">Reference proteome</keyword>
<keyword id="KW-0808">Transferase</keyword>
<protein>
    <recommendedName>
        <fullName evidence="1">Acetyl-coenzyme A carboxylase carboxyl transferase subunit alpha</fullName>
        <shortName evidence="1">ACCase subunit alpha</shortName>
        <shortName evidence="1">Acetyl-CoA carboxylase carboxyltransferase subunit alpha</shortName>
        <ecNumber evidence="1">2.1.3.15</ecNumber>
    </recommendedName>
</protein>
<evidence type="ECO:0000255" key="1">
    <source>
        <dbReference type="HAMAP-Rule" id="MF_00823"/>
    </source>
</evidence>
<evidence type="ECO:0000255" key="2">
    <source>
        <dbReference type="PROSITE-ProRule" id="PRU01137"/>
    </source>
</evidence>
<proteinExistence type="inferred from homology"/>
<reference key="1">
    <citation type="journal article" date="2004" name="Nature">
        <title>Genome sequence of Silicibacter pomeroyi reveals adaptations to the marine environment.</title>
        <authorList>
            <person name="Moran M.A."/>
            <person name="Buchan A."/>
            <person name="Gonzalez J.M."/>
            <person name="Heidelberg J.F."/>
            <person name="Whitman W.B."/>
            <person name="Kiene R.P."/>
            <person name="Henriksen J.R."/>
            <person name="King G.M."/>
            <person name="Belas R."/>
            <person name="Fuqua C."/>
            <person name="Brinkac L.M."/>
            <person name="Lewis M."/>
            <person name="Johri S."/>
            <person name="Weaver B."/>
            <person name="Pai G."/>
            <person name="Eisen J.A."/>
            <person name="Rahe E."/>
            <person name="Sheldon W.M."/>
            <person name="Ye W."/>
            <person name="Miller T.R."/>
            <person name="Carlton J."/>
            <person name="Rasko D.A."/>
            <person name="Paulsen I.T."/>
            <person name="Ren Q."/>
            <person name="Daugherty S.C."/>
            <person name="DeBoy R.T."/>
            <person name="Dodson R.J."/>
            <person name="Durkin A.S."/>
            <person name="Madupu R."/>
            <person name="Nelson W.C."/>
            <person name="Sullivan S.A."/>
            <person name="Rosovitz M.J."/>
            <person name="Haft D.H."/>
            <person name="Selengut J."/>
            <person name="Ward N."/>
        </authorList>
    </citation>
    <scope>NUCLEOTIDE SEQUENCE [LARGE SCALE GENOMIC DNA]</scope>
    <source>
        <strain>ATCC 700808 / DSM 15171 / DSS-3</strain>
    </source>
</reference>
<reference key="2">
    <citation type="journal article" date="2014" name="Stand. Genomic Sci.">
        <title>An updated genome annotation for the model marine bacterium Ruegeria pomeroyi DSS-3.</title>
        <authorList>
            <person name="Rivers A.R."/>
            <person name="Smith C.B."/>
            <person name="Moran M.A."/>
        </authorList>
    </citation>
    <scope>GENOME REANNOTATION</scope>
    <source>
        <strain>ATCC 700808 / DSM 15171 / DSS-3</strain>
    </source>
</reference>
<gene>
    <name evidence="1" type="primary">accA</name>
    <name type="ordered locus">SPO3616</name>
</gene>
<organism>
    <name type="scientific">Ruegeria pomeroyi (strain ATCC 700808 / DSM 15171 / DSS-3)</name>
    <name type="common">Silicibacter pomeroyi</name>
    <dbReference type="NCBI Taxonomy" id="246200"/>
    <lineage>
        <taxon>Bacteria</taxon>
        <taxon>Pseudomonadati</taxon>
        <taxon>Pseudomonadota</taxon>
        <taxon>Alphaproteobacteria</taxon>
        <taxon>Rhodobacterales</taxon>
        <taxon>Roseobacteraceae</taxon>
        <taxon>Ruegeria</taxon>
    </lineage>
</organism>
<dbReference type="EC" id="2.1.3.15" evidence="1"/>
<dbReference type="EMBL" id="CP000031">
    <property type="protein sequence ID" value="AAV96840.1"/>
    <property type="molecule type" value="Genomic_DNA"/>
</dbReference>
<dbReference type="RefSeq" id="WP_011049296.1">
    <property type="nucleotide sequence ID" value="NC_003911.12"/>
</dbReference>
<dbReference type="SMR" id="Q5LME7"/>
<dbReference type="STRING" id="246200.SPO3616"/>
<dbReference type="PaxDb" id="246200-SPO3616"/>
<dbReference type="KEGG" id="sil:SPO3616"/>
<dbReference type="eggNOG" id="COG0825">
    <property type="taxonomic scope" value="Bacteria"/>
</dbReference>
<dbReference type="HOGENOM" id="CLU_015486_0_2_5"/>
<dbReference type="OrthoDB" id="9808023at2"/>
<dbReference type="UniPathway" id="UPA00655">
    <property type="reaction ID" value="UER00711"/>
</dbReference>
<dbReference type="Proteomes" id="UP000001023">
    <property type="component" value="Chromosome"/>
</dbReference>
<dbReference type="GO" id="GO:0009317">
    <property type="term" value="C:acetyl-CoA carboxylase complex"/>
    <property type="evidence" value="ECO:0007669"/>
    <property type="project" value="InterPro"/>
</dbReference>
<dbReference type="GO" id="GO:0003989">
    <property type="term" value="F:acetyl-CoA carboxylase activity"/>
    <property type="evidence" value="ECO:0007669"/>
    <property type="project" value="InterPro"/>
</dbReference>
<dbReference type="GO" id="GO:0005524">
    <property type="term" value="F:ATP binding"/>
    <property type="evidence" value="ECO:0007669"/>
    <property type="project" value="UniProtKB-KW"/>
</dbReference>
<dbReference type="GO" id="GO:0016743">
    <property type="term" value="F:carboxyl- or carbamoyltransferase activity"/>
    <property type="evidence" value="ECO:0007669"/>
    <property type="project" value="UniProtKB-UniRule"/>
</dbReference>
<dbReference type="GO" id="GO:0006633">
    <property type="term" value="P:fatty acid biosynthetic process"/>
    <property type="evidence" value="ECO:0007669"/>
    <property type="project" value="UniProtKB-KW"/>
</dbReference>
<dbReference type="GO" id="GO:2001295">
    <property type="term" value="P:malonyl-CoA biosynthetic process"/>
    <property type="evidence" value="ECO:0007669"/>
    <property type="project" value="UniProtKB-UniRule"/>
</dbReference>
<dbReference type="Gene3D" id="3.90.226.10">
    <property type="entry name" value="2-enoyl-CoA Hydratase, Chain A, domain 1"/>
    <property type="match status" value="1"/>
</dbReference>
<dbReference type="HAMAP" id="MF_00823">
    <property type="entry name" value="AcetylCoA_CT_alpha"/>
    <property type="match status" value="1"/>
</dbReference>
<dbReference type="InterPro" id="IPR001095">
    <property type="entry name" value="Acetyl_CoA_COase_a_su"/>
</dbReference>
<dbReference type="InterPro" id="IPR029045">
    <property type="entry name" value="ClpP/crotonase-like_dom_sf"/>
</dbReference>
<dbReference type="InterPro" id="IPR011763">
    <property type="entry name" value="COA_CT_C"/>
</dbReference>
<dbReference type="NCBIfam" id="TIGR00513">
    <property type="entry name" value="accA"/>
    <property type="match status" value="1"/>
</dbReference>
<dbReference type="NCBIfam" id="NF041504">
    <property type="entry name" value="AccA_sub"/>
    <property type="match status" value="1"/>
</dbReference>
<dbReference type="NCBIfam" id="NF004344">
    <property type="entry name" value="PRK05724.1"/>
    <property type="match status" value="1"/>
</dbReference>
<dbReference type="PANTHER" id="PTHR42853">
    <property type="entry name" value="ACETYL-COENZYME A CARBOXYLASE CARBOXYL TRANSFERASE SUBUNIT ALPHA"/>
    <property type="match status" value="1"/>
</dbReference>
<dbReference type="PANTHER" id="PTHR42853:SF3">
    <property type="entry name" value="ACETYL-COENZYME A CARBOXYLASE CARBOXYL TRANSFERASE SUBUNIT ALPHA, CHLOROPLASTIC"/>
    <property type="match status" value="1"/>
</dbReference>
<dbReference type="Pfam" id="PF03255">
    <property type="entry name" value="ACCA"/>
    <property type="match status" value="1"/>
</dbReference>
<dbReference type="PRINTS" id="PR01069">
    <property type="entry name" value="ACCCTRFRASEA"/>
</dbReference>
<dbReference type="SUPFAM" id="SSF52096">
    <property type="entry name" value="ClpP/crotonase"/>
    <property type="match status" value="1"/>
</dbReference>
<dbReference type="PROSITE" id="PS50989">
    <property type="entry name" value="COA_CT_CTER"/>
    <property type="match status" value="1"/>
</dbReference>